<keyword id="KW-0066">ATP synthesis</keyword>
<keyword id="KW-1003">Cell membrane</keyword>
<keyword id="KW-0139">CF(1)</keyword>
<keyword id="KW-0375">Hydrogen ion transport</keyword>
<keyword id="KW-0406">Ion transport</keyword>
<keyword id="KW-0472">Membrane</keyword>
<keyword id="KW-0813">Transport</keyword>
<name>ATPE_STRA1</name>
<comment type="function">
    <text evidence="1">Produces ATP from ADP in the presence of a proton gradient across the membrane.</text>
</comment>
<comment type="subunit">
    <text>F-type ATPases have 2 components, CF(1) - the catalytic core - and CF(0) - the membrane proton channel. CF(1) has five subunits: alpha(3), beta(3), gamma(1), delta(1), epsilon(1). CF(0) has three main subunits: a, b and c.</text>
</comment>
<comment type="subcellular location">
    <subcellularLocation>
        <location evidence="1">Cell membrane</location>
        <topology evidence="1">Peripheral membrane protein</topology>
    </subcellularLocation>
</comment>
<comment type="similarity">
    <text evidence="1">Belongs to the ATPase epsilon chain family.</text>
</comment>
<dbReference type="EMBL" id="CP000114">
    <property type="protein sequence ID" value="ABA45595.1"/>
    <property type="molecule type" value="Genomic_DNA"/>
</dbReference>
<dbReference type="RefSeq" id="WP_000068054.1">
    <property type="nucleotide sequence ID" value="NC_007432.1"/>
</dbReference>
<dbReference type="SMR" id="Q3K1J4"/>
<dbReference type="KEGG" id="sak:SAK_0987"/>
<dbReference type="HOGENOM" id="CLU_084338_1_0_9"/>
<dbReference type="GO" id="GO:0005886">
    <property type="term" value="C:plasma membrane"/>
    <property type="evidence" value="ECO:0007669"/>
    <property type="project" value="UniProtKB-SubCell"/>
</dbReference>
<dbReference type="GO" id="GO:0045259">
    <property type="term" value="C:proton-transporting ATP synthase complex"/>
    <property type="evidence" value="ECO:0007669"/>
    <property type="project" value="UniProtKB-KW"/>
</dbReference>
<dbReference type="GO" id="GO:0005524">
    <property type="term" value="F:ATP binding"/>
    <property type="evidence" value="ECO:0007669"/>
    <property type="project" value="UniProtKB-UniRule"/>
</dbReference>
<dbReference type="GO" id="GO:0046933">
    <property type="term" value="F:proton-transporting ATP synthase activity, rotational mechanism"/>
    <property type="evidence" value="ECO:0007669"/>
    <property type="project" value="UniProtKB-UniRule"/>
</dbReference>
<dbReference type="CDD" id="cd12152">
    <property type="entry name" value="F1-ATPase_delta"/>
    <property type="match status" value="1"/>
</dbReference>
<dbReference type="Gene3D" id="1.20.5.440">
    <property type="entry name" value="ATP synthase delta/epsilon subunit, C-terminal domain"/>
    <property type="match status" value="1"/>
</dbReference>
<dbReference type="Gene3D" id="2.60.15.10">
    <property type="entry name" value="F0F1 ATP synthase delta/epsilon subunit, N-terminal"/>
    <property type="match status" value="1"/>
</dbReference>
<dbReference type="HAMAP" id="MF_00530">
    <property type="entry name" value="ATP_synth_epsil_bac"/>
    <property type="match status" value="1"/>
</dbReference>
<dbReference type="InterPro" id="IPR036794">
    <property type="entry name" value="ATP_F1_dsu/esu_C_sf"/>
</dbReference>
<dbReference type="InterPro" id="IPR001469">
    <property type="entry name" value="ATP_synth_F1_dsu/esu"/>
</dbReference>
<dbReference type="InterPro" id="IPR020546">
    <property type="entry name" value="ATP_synth_F1_dsu/esu_N"/>
</dbReference>
<dbReference type="InterPro" id="IPR020547">
    <property type="entry name" value="ATP_synth_F1_esu_C"/>
</dbReference>
<dbReference type="InterPro" id="IPR036771">
    <property type="entry name" value="ATPsynth_dsu/esu_N"/>
</dbReference>
<dbReference type="NCBIfam" id="TIGR01216">
    <property type="entry name" value="ATP_synt_epsi"/>
    <property type="match status" value="1"/>
</dbReference>
<dbReference type="NCBIfam" id="NF001846">
    <property type="entry name" value="PRK00571.1-3"/>
    <property type="match status" value="1"/>
</dbReference>
<dbReference type="PANTHER" id="PTHR13822">
    <property type="entry name" value="ATP SYNTHASE DELTA/EPSILON CHAIN"/>
    <property type="match status" value="1"/>
</dbReference>
<dbReference type="PANTHER" id="PTHR13822:SF10">
    <property type="entry name" value="ATP SYNTHASE EPSILON CHAIN, CHLOROPLASTIC"/>
    <property type="match status" value="1"/>
</dbReference>
<dbReference type="Pfam" id="PF00401">
    <property type="entry name" value="ATP-synt_DE"/>
    <property type="match status" value="1"/>
</dbReference>
<dbReference type="Pfam" id="PF02823">
    <property type="entry name" value="ATP-synt_DE_N"/>
    <property type="match status" value="1"/>
</dbReference>
<dbReference type="SUPFAM" id="SSF46604">
    <property type="entry name" value="Epsilon subunit of F1F0-ATP synthase C-terminal domain"/>
    <property type="match status" value="1"/>
</dbReference>
<dbReference type="SUPFAM" id="SSF51344">
    <property type="entry name" value="Epsilon subunit of F1F0-ATP synthase N-terminal domain"/>
    <property type="match status" value="1"/>
</dbReference>
<protein>
    <recommendedName>
        <fullName evidence="1">ATP synthase epsilon chain</fullName>
    </recommendedName>
    <alternativeName>
        <fullName evidence="1">ATP synthase F1 sector epsilon subunit</fullName>
    </alternativeName>
    <alternativeName>
        <fullName evidence="1">F-ATPase epsilon subunit</fullName>
    </alternativeName>
</protein>
<feature type="chain" id="PRO_0000265901" description="ATP synthase epsilon chain">
    <location>
        <begin position="1"/>
        <end position="137"/>
    </location>
</feature>
<sequence length="137" mass="15303">MAQLTVQVVTPDGIRYDHHASLITVRTPDGEMGILPGHINLIAPLNVHQMKINRSHQEGVDWVAVNGGIIEVNEDQVTIVADSAERARDIDLNRAERAKERAERALEKAQTTQNIDEMRRAEVALRRAINRISVGKK</sequence>
<proteinExistence type="inferred from homology"/>
<gene>
    <name evidence="1" type="primary">atpC</name>
    <name type="ordered locus">SAK_0987</name>
</gene>
<organism>
    <name type="scientific">Streptococcus agalactiae serotype Ia (strain ATCC 27591 / A909 / CDC SS700)</name>
    <dbReference type="NCBI Taxonomy" id="205921"/>
    <lineage>
        <taxon>Bacteria</taxon>
        <taxon>Bacillati</taxon>
        <taxon>Bacillota</taxon>
        <taxon>Bacilli</taxon>
        <taxon>Lactobacillales</taxon>
        <taxon>Streptococcaceae</taxon>
        <taxon>Streptococcus</taxon>
    </lineage>
</organism>
<accession>Q3K1J4</accession>
<reference key="1">
    <citation type="journal article" date="2005" name="Proc. Natl. Acad. Sci. U.S.A.">
        <title>Genome analysis of multiple pathogenic isolates of Streptococcus agalactiae: implications for the microbial 'pan-genome'.</title>
        <authorList>
            <person name="Tettelin H."/>
            <person name="Masignani V."/>
            <person name="Cieslewicz M.J."/>
            <person name="Donati C."/>
            <person name="Medini D."/>
            <person name="Ward N.L."/>
            <person name="Angiuoli S.V."/>
            <person name="Crabtree J."/>
            <person name="Jones A.L."/>
            <person name="Durkin A.S."/>
            <person name="DeBoy R.T."/>
            <person name="Davidsen T.M."/>
            <person name="Mora M."/>
            <person name="Scarselli M."/>
            <person name="Margarit y Ros I."/>
            <person name="Peterson J.D."/>
            <person name="Hauser C.R."/>
            <person name="Sundaram J.P."/>
            <person name="Nelson W.C."/>
            <person name="Madupu R."/>
            <person name="Brinkac L.M."/>
            <person name="Dodson R.J."/>
            <person name="Rosovitz M.J."/>
            <person name="Sullivan S.A."/>
            <person name="Daugherty S.C."/>
            <person name="Haft D.H."/>
            <person name="Selengut J."/>
            <person name="Gwinn M.L."/>
            <person name="Zhou L."/>
            <person name="Zafar N."/>
            <person name="Khouri H."/>
            <person name="Radune D."/>
            <person name="Dimitrov G."/>
            <person name="Watkins K."/>
            <person name="O'Connor K.J."/>
            <person name="Smith S."/>
            <person name="Utterback T.R."/>
            <person name="White O."/>
            <person name="Rubens C.E."/>
            <person name="Grandi G."/>
            <person name="Madoff L.C."/>
            <person name="Kasper D.L."/>
            <person name="Telford J.L."/>
            <person name="Wessels M.R."/>
            <person name="Rappuoli R."/>
            <person name="Fraser C.M."/>
        </authorList>
    </citation>
    <scope>NUCLEOTIDE SEQUENCE [LARGE SCALE GENOMIC DNA]</scope>
    <source>
        <strain>ATCC 27591 / A909 / CDC SS700</strain>
    </source>
</reference>
<evidence type="ECO:0000255" key="1">
    <source>
        <dbReference type="HAMAP-Rule" id="MF_00530"/>
    </source>
</evidence>